<gene>
    <name type="primary">st6gal2</name>
</gene>
<sequence>MKSWVRQGRRLVLVGMLAWVLLFLALLSYFLDARVNEPLTSTGSVLYQHPDTRRLASIQASQLHNTNLGSRPELASTLTATYTRDEPRPSATPEFSLEASQSPDSAPLAIYGGPEGIHQDYLDPQSLAAWSSFGTENIGSQSDPVIQSRERTSQNHGSITRYRGGEEEEEEEEEEERQENEDEDVANGLRNTAARKPGGDSSELEKYYFSKSISVVQRLWRGHVSADMLSPRLQRAMKDYVSANKHQVSYRGRRRPSQSAKELLCEMKAQARLQMVDGTQQPFSSLGWASLVPSLPLEQLHKRPDQGSFKSCAVVTSAGAILRSGLGREIDAHDAVLRFNAAPTEGYERDVGNKTTIRIINSQILANPNHRFNTSSLYKDVVLVAWDPAPYTLDLHKWYASPDYNLFGPYMEHRRAHPDQPFYILHPRYVWRLWDVIQGNTQENIQPNPPSSGFIGILLMMTLCEQVHVYEYIPSMRQSDLCHYHERYYDAACTLGAYHPLLYEKSLIQRINTGPGSDLRRKGRVTLPGFSTVDCDI</sequence>
<comment type="function">
    <text evidence="1">Transfers sialic acid from the donor of substrate CMP-sialic acid to galactose containing acceptor substrates.</text>
</comment>
<comment type="catalytic activity">
    <reaction evidence="2">
        <text>a beta-D-galactoside + CMP-N-acetyl-beta-neuraminate = an N-acetyl-alpha-neuraminyl-(2-&gt;6)-beta-D-galactosyl derivative + CMP + H(+)</text>
        <dbReference type="Rhea" id="RHEA:52104"/>
        <dbReference type="ChEBI" id="CHEBI:15378"/>
        <dbReference type="ChEBI" id="CHEBI:28034"/>
        <dbReference type="ChEBI" id="CHEBI:57812"/>
        <dbReference type="ChEBI" id="CHEBI:60377"/>
        <dbReference type="ChEBI" id="CHEBI:136398"/>
        <dbReference type="EC" id="2.4.3.1"/>
    </reaction>
</comment>
<comment type="subcellular location">
    <subcellularLocation>
        <location evidence="1">Golgi apparatus</location>
        <location evidence="1">Golgi stack membrane</location>
        <topology evidence="1">Single-pass type II membrane protein</topology>
    </subcellularLocation>
</comment>
<comment type="similarity">
    <text evidence="5">Belongs to the glycosyltransferase 29 family.</text>
</comment>
<organism>
    <name type="scientific">Takifugu rubripes</name>
    <name type="common">Japanese pufferfish</name>
    <name type="synonym">Fugu rubripes</name>
    <dbReference type="NCBI Taxonomy" id="31033"/>
    <lineage>
        <taxon>Eukaryota</taxon>
        <taxon>Metazoa</taxon>
        <taxon>Chordata</taxon>
        <taxon>Craniata</taxon>
        <taxon>Vertebrata</taxon>
        <taxon>Euteleostomi</taxon>
        <taxon>Actinopterygii</taxon>
        <taxon>Neopterygii</taxon>
        <taxon>Teleostei</taxon>
        <taxon>Neoteleostei</taxon>
        <taxon>Acanthomorphata</taxon>
        <taxon>Eupercaria</taxon>
        <taxon>Tetraodontiformes</taxon>
        <taxon>Tetradontoidea</taxon>
        <taxon>Tetraodontidae</taxon>
        <taxon>Takifugu</taxon>
    </lineage>
</organism>
<keyword id="KW-1015">Disulfide bond</keyword>
<keyword id="KW-0325">Glycoprotein</keyword>
<keyword id="KW-0328">Glycosyltransferase</keyword>
<keyword id="KW-0333">Golgi apparatus</keyword>
<keyword id="KW-0472">Membrane</keyword>
<keyword id="KW-1185">Reference proteome</keyword>
<keyword id="KW-0735">Signal-anchor</keyword>
<keyword id="KW-0808">Transferase</keyword>
<keyword id="KW-0812">Transmembrane</keyword>
<keyword id="KW-1133">Transmembrane helix</keyword>
<evidence type="ECO:0000250" key="1"/>
<evidence type="ECO:0000250" key="2">
    <source>
        <dbReference type="UniProtKB" id="Q96JF0"/>
    </source>
</evidence>
<evidence type="ECO:0000255" key="3"/>
<evidence type="ECO:0000256" key="4">
    <source>
        <dbReference type="SAM" id="MobiDB-lite"/>
    </source>
</evidence>
<evidence type="ECO:0000305" key="5"/>
<proteinExistence type="evidence at transcript level"/>
<accession>Q5QQ37</accession>
<reference key="1">
    <citation type="journal article" date="2005" name="Glycobiology">
        <title>The animal sialyltransferases and sialyltransferase-related genes: a phylogenetic approach.</title>
        <authorList>
            <person name="Harduin-Lepers A."/>
            <person name="Mollicone R."/>
            <person name="Delannoy P."/>
            <person name="Oriol R."/>
        </authorList>
    </citation>
    <scope>NUCLEOTIDE SEQUENCE [MRNA]</scope>
</reference>
<feature type="chain" id="PRO_0000314791" description="Beta-galactoside alpha-2,6-sialyltransferase 2">
    <location>
        <begin position="1"/>
        <end position="537"/>
    </location>
</feature>
<feature type="topological domain" description="Cytoplasmic" evidence="3">
    <location>
        <begin position="1"/>
        <end position="10"/>
    </location>
</feature>
<feature type="transmembrane region" description="Helical; Signal-anchor for type II membrane protein" evidence="3">
    <location>
        <begin position="11"/>
        <end position="31"/>
    </location>
</feature>
<feature type="topological domain" description="Lumenal" evidence="3">
    <location>
        <begin position="32"/>
        <end position="537"/>
    </location>
</feature>
<feature type="region of interest" description="Disordered" evidence="4">
    <location>
        <begin position="83"/>
        <end position="117"/>
    </location>
</feature>
<feature type="region of interest" description="Disordered" evidence="4">
    <location>
        <begin position="134"/>
        <end position="202"/>
    </location>
</feature>
<feature type="compositionally biased region" description="Polar residues" evidence="4">
    <location>
        <begin position="134"/>
        <end position="145"/>
    </location>
</feature>
<feature type="compositionally biased region" description="Acidic residues" evidence="4">
    <location>
        <begin position="166"/>
        <end position="185"/>
    </location>
</feature>
<feature type="glycosylation site" description="N-linked (GlcNAc...) asparagine" evidence="3">
    <location>
        <position position="353"/>
    </location>
</feature>
<feature type="glycosylation site" description="N-linked (GlcNAc...) asparagine" evidence="3">
    <location>
        <position position="373"/>
    </location>
</feature>
<feature type="disulfide bond" evidence="1">
    <location>
        <begin position="265"/>
        <end position="535"/>
    </location>
</feature>
<feature type="disulfide bond" evidence="1">
    <location>
        <begin position="312"/>
        <end position="464"/>
    </location>
</feature>
<feature type="disulfide bond" evidence="1">
    <location>
        <begin position="482"/>
        <end position="493"/>
    </location>
</feature>
<protein>
    <recommendedName>
        <fullName>Beta-galactoside alpha-2,6-sialyltransferase 2</fullName>
        <shortName>Alpha 2,6-ST 2</shortName>
        <ecNumber evidence="2">2.4.3.1</ecNumber>
    </recommendedName>
    <alternativeName>
        <fullName>CMP-N-acetylneuraminate-beta-galactosamide-alpha-2,6-sialyltransferase 2</fullName>
    </alternativeName>
    <alternativeName>
        <fullName>ST6Gal II</fullName>
        <shortName>ST6GalII</shortName>
    </alternativeName>
    <alternativeName>
        <fullName>Sialyltransferase 2</fullName>
    </alternativeName>
</protein>
<name>SIAT2_TAKRU</name>
<dbReference type="EC" id="2.4.3.1" evidence="2"/>
<dbReference type="EMBL" id="AJ866779">
    <property type="protein sequence ID" value="CAI29184.1"/>
    <property type="molecule type" value="mRNA"/>
</dbReference>
<dbReference type="RefSeq" id="XP_011606552.1">
    <property type="nucleotide sequence ID" value="XM_011608250.1"/>
</dbReference>
<dbReference type="RefSeq" id="XP_011606557.1">
    <property type="nucleotide sequence ID" value="XM_011608255.1"/>
</dbReference>
<dbReference type="SMR" id="Q5QQ37"/>
<dbReference type="FunCoup" id="Q5QQ37">
    <property type="interactions" value="288"/>
</dbReference>
<dbReference type="STRING" id="31033.ENSTRUP00000034079"/>
<dbReference type="CAZy" id="GT29">
    <property type="family name" value="Glycosyltransferase Family 29"/>
</dbReference>
<dbReference type="GlyCosmos" id="Q5QQ37">
    <property type="glycosylation" value="2 sites, No reported glycans"/>
</dbReference>
<dbReference type="GeneID" id="777969"/>
<dbReference type="KEGG" id="tru:777969"/>
<dbReference type="CTD" id="403116"/>
<dbReference type="eggNOG" id="KOG2692">
    <property type="taxonomic scope" value="Eukaryota"/>
</dbReference>
<dbReference type="InParanoid" id="Q5QQ37"/>
<dbReference type="OrthoDB" id="10264956at2759"/>
<dbReference type="BRENDA" id="2.4.99.1">
    <property type="organism ID" value="6209"/>
</dbReference>
<dbReference type="Proteomes" id="UP000005226">
    <property type="component" value="Unplaced"/>
</dbReference>
<dbReference type="GO" id="GO:0032580">
    <property type="term" value="C:Golgi cisterna membrane"/>
    <property type="evidence" value="ECO:0007669"/>
    <property type="project" value="UniProtKB-SubCell"/>
</dbReference>
<dbReference type="GO" id="GO:0003835">
    <property type="term" value="F:beta-galactoside alpha-2,6-sialyltransferase activity"/>
    <property type="evidence" value="ECO:0007669"/>
    <property type="project" value="RHEA"/>
</dbReference>
<dbReference type="GO" id="GO:0006486">
    <property type="term" value="P:protein glycosylation"/>
    <property type="evidence" value="ECO:0007669"/>
    <property type="project" value="InterPro"/>
</dbReference>
<dbReference type="GO" id="GO:0097503">
    <property type="term" value="P:sialylation"/>
    <property type="evidence" value="ECO:0007669"/>
    <property type="project" value="TreeGrafter"/>
</dbReference>
<dbReference type="FunFam" id="3.90.1480.20:FF:000010">
    <property type="entry name" value="ST6 beta-galactoside alpha-2,6-sialyltransferase 2"/>
    <property type="match status" value="1"/>
</dbReference>
<dbReference type="Gene3D" id="3.90.1480.20">
    <property type="entry name" value="Glycosyl transferase family 29"/>
    <property type="match status" value="1"/>
</dbReference>
<dbReference type="InterPro" id="IPR001675">
    <property type="entry name" value="Glyco_trans_29"/>
</dbReference>
<dbReference type="InterPro" id="IPR038578">
    <property type="entry name" value="GT29-like_sf"/>
</dbReference>
<dbReference type="PANTHER" id="PTHR46059">
    <property type="entry name" value="BETA-GALACTOSIDE ALPHA-2,6-SIALYLTRANSFERASE"/>
    <property type="match status" value="1"/>
</dbReference>
<dbReference type="PANTHER" id="PTHR46059:SF3">
    <property type="entry name" value="BETA-GALACTOSIDE ALPHA-2,6-SIALYLTRANSFERASE 2"/>
    <property type="match status" value="1"/>
</dbReference>
<dbReference type="Pfam" id="PF00777">
    <property type="entry name" value="Glyco_transf_29"/>
    <property type="match status" value="1"/>
</dbReference>